<protein>
    <recommendedName>
        <fullName evidence="1">HTH-type transcriptional regulator ArgP</fullName>
    </recommendedName>
</protein>
<comment type="function">
    <text evidence="1">Controls the transcription of genes involved in arginine and lysine metabolism.</text>
</comment>
<comment type="subunit">
    <text evidence="1">Homodimer.</text>
</comment>
<comment type="similarity">
    <text evidence="2">Belongs to the LysR transcriptional regulatory family.</text>
</comment>
<accession>Q9KUN3</accession>
<reference key="1">
    <citation type="journal article" date="2000" name="Nature">
        <title>DNA sequence of both chromosomes of the cholera pathogen Vibrio cholerae.</title>
        <authorList>
            <person name="Heidelberg J.F."/>
            <person name="Eisen J.A."/>
            <person name="Nelson W.C."/>
            <person name="Clayton R.A."/>
            <person name="Gwinn M.L."/>
            <person name="Dodson R.J."/>
            <person name="Haft D.H."/>
            <person name="Hickey E.K."/>
            <person name="Peterson J.D."/>
            <person name="Umayam L.A."/>
            <person name="Gill S.R."/>
            <person name="Nelson K.E."/>
            <person name="Read T.D."/>
            <person name="Tettelin H."/>
            <person name="Richardson D.L."/>
            <person name="Ermolaeva M.D."/>
            <person name="Vamathevan J.J."/>
            <person name="Bass S."/>
            <person name="Qin H."/>
            <person name="Dragoi I."/>
            <person name="Sellers P."/>
            <person name="McDonald L.A."/>
            <person name="Utterback T.R."/>
            <person name="Fleischmann R.D."/>
            <person name="Nierman W.C."/>
            <person name="White O."/>
            <person name="Salzberg S.L."/>
            <person name="Smith H.O."/>
            <person name="Colwell R.R."/>
            <person name="Mekalanos J.J."/>
            <person name="Venter J.C."/>
            <person name="Fraser C.M."/>
        </authorList>
    </citation>
    <scope>NUCLEOTIDE SEQUENCE [LARGE SCALE GENOMIC DNA]</scope>
    <source>
        <strain>ATCC 39315 / El Tor Inaba N16961</strain>
    </source>
</reference>
<dbReference type="EMBL" id="AE003852">
    <property type="protein sequence ID" value="AAF93655.1"/>
    <property type="molecule type" value="Genomic_DNA"/>
</dbReference>
<dbReference type="PIR" id="C82318">
    <property type="entry name" value="C82318"/>
</dbReference>
<dbReference type="RefSeq" id="NP_230136.1">
    <property type="nucleotide sequence ID" value="NC_002505.1"/>
</dbReference>
<dbReference type="RefSeq" id="WP_001214483.1">
    <property type="nucleotide sequence ID" value="NZ_LT906614.1"/>
</dbReference>
<dbReference type="SMR" id="Q9KUN3"/>
<dbReference type="STRING" id="243277.VC_0482"/>
<dbReference type="DNASU" id="2615276"/>
<dbReference type="EnsemblBacteria" id="AAF93655">
    <property type="protein sequence ID" value="AAF93655"/>
    <property type="gene ID" value="VC_0482"/>
</dbReference>
<dbReference type="KEGG" id="vch:VC_0482"/>
<dbReference type="PATRIC" id="fig|243277.26.peg.455"/>
<dbReference type="eggNOG" id="COG0583">
    <property type="taxonomic scope" value="Bacteria"/>
</dbReference>
<dbReference type="HOGENOM" id="CLU_063829_0_0_6"/>
<dbReference type="Proteomes" id="UP000000584">
    <property type="component" value="Chromosome 1"/>
</dbReference>
<dbReference type="GO" id="GO:0003677">
    <property type="term" value="F:DNA binding"/>
    <property type="evidence" value="ECO:0007669"/>
    <property type="project" value="UniProtKB-UniRule"/>
</dbReference>
<dbReference type="GO" id="GO:0003700">
    <property type="term" value="F:DNA-binding transcription factor activity"/>
    <property type="evidence" value="ECO:0000318"/>
    <property type="project" value="GO_Central"/>
</dbReference>
<dbReference type="GO" id="GO:0006355">
    <property type="term" value="P:regulation of DNA-templated transcription"/>
    <property type="evidence" value="ECO:0000318"/>
    <property type="project" value="GO_Central"/>
</dbReference>
<dbReference type="CDD" id="cd08428">
    <property type="entry name" value="PBP2_IciA_ArgP"/>
    <property type="match status" value="1"/>
</dbReference>
<dbReference type="FunFam" id="1.10.10.10:FF:000061">
    <property type="entry name" value="HTH-type transcriptional regulator ArgP"/>
    <property type="match status" value="1"/>
</dbReference>
<dbReference type="FunFam" id="3.40.190.290:FF:000070">
    <property type="entry name" value="HTH-type transcriptional regulator ArgP"/>
    <property type="match status" value="1"/>
</dbReference>
<dbReference type="Gene3D" id="3.40.190.290">
    <property type="match status" value="1"/>
</dbReference>
<dbReference type="Gene3D" id="1.10.10.10">
    <property type="entry name" value="Winged helix-like DNA-binding domain superfamily/Winged helix DNA-binding domain"/>
    <property type="match status" value="1"/>
</dbReference>
<dbReference type="HAMAP" id="MF_00513">
    <property type="entry name" value="HTH_type_ArgP"/>
    <property type="match status" value="1"/>
</dbReference>
<dbReference type="InterPro" id="IPR017685">
    <property type="entry name" value="ArgP"/>
</dbReference>
<dbReference type="InterPro" id="IPR023490">
    <property type="entry name" value="ArgP_gammaproteobact"/>
</dbReference>
<dbReference type="InterPro" id="IPR050176">
    <property type="entry name" value="LTTR"/>
</dbReference>
<dbReference type="InterPro" id="IPR005119">
    <property type="entry name" value="LysR_subst-bd"/>
</dbReference>
<dbReference type="InterPro" id="IPR000847">
    <property type="entry name" value="Tscrpt_reg_HTH_LysR"/>
</dbReference>
<dbReference type="InterPro" id="IPR036388">
    <property type="entry name" value="WH-like_DNA-bd_sf"/>
</dbReference>
<dbReference type="InterPro" id="IPR036390">
    <property type="entry name" value="WH_DNA-bd_sf"/>
</dbReference>
<dbReference type="NCBIfam" id="TIGR03298">
    <property type="entry name" value="argP"/>
    <property type="match status" value="1"/>
</dbReference>
<dbReference type="NCBIfam" id="NF002964">
    <property type="entry name" value="PRK03635.1"/>
    <property type="match status" value="1"/>
</dbReference>
<dbReference type="NCBIfam" id="NF009888">
    <property type="entry name" value="PRK13348.1"/>
    <property type="match status" value="1"/>
</dbReference>
<dbReference type="PANTHER" id="PTHR30579:SF2">
    <property type="entry name" value="HTH-TYPE TRANSCRIPTIONAL REGULATOR ARGP"/>
    <property type="match status" value="1"/>
</dbReference>
<dbReference type="PANTHER" id="PTHR30579">
    <property type="entry name" value="TRANSCRIPTIONAL REGULATOR"/>
    <property type="match status" value="1"/>
</dbReference>
<dbReference type="Pfam" id="PF00126">
    <property type="entry name" value="HTH_1"/>
    <property type="match status" value="1"/>
</dbReference>
<dbReference type="Pfam" id="PF03466">
    <property type="entry name" value="LysR_substrate"/>
    <property type="match status" value="1"/>
</dbReference>
<dbReference type="PRINTS" id="PR00039">
    <property type="entry name" value="HTHLYSR"/>
</dbReference>
<dbReference type="SUPFAM" id="SSF53850">
    <property type="entry name" value="Periplasmic binding protein-like II"/>
    <property type="match status" value="1"/>
</dbReference>
<dbReference type="SUPFAM" id="SSF46785">
    <property type="entry name" value="Winged helix' DNA-binding domain"/>
    <property type="match status" value="1"/>
</dbReference>
<dbReference type="PROSITE" id="PS50931">
    <property type="entry name" value="HTH_LYSR"/>
    <property type="match status" value="1"/>
</dbReference>
<proteinExistence type="inferred from homology"/>
<name>ARGP_VIBCH</name>
<evidence type="ECO:0000255" key="1">
    <source>
        <dbReference type="HAMAP-Rule" id="MF_00513"/>
    </source>
</evidence>
<evidence type="ECO:0000305" key="2"/>
<feature type="chain" id="PRO_0000105649" description="HTH-type transcriptional regulator ArgP">
    <location>
        <begin position="1"/>
        <end position="298"/>
    </location>
</feature>
<feature type="domain" description="HTH lysR-type" evidence="1">
    <location>
        <begin position="4"/>
        <end position="60"/>
    </location>
</feature>
<feature type="DNA-binding region" description="H-T-H motif" evidence="1">
    <location>
        <begin position="21"/>
        <end position="40"/>
    </location>
</feature>
<organism>
    <name type="scientific">Vibrio cholerae serotype O1 (strain ATCC 39315 / El Tor Inaba N16961)</name>
    <dbReference type="NCBI Taxonomy" id="243277"/>
    <lineage>
        <taxon>Bacteria</taxon>
        <taxon>Pseudomonadati</taxon>
        <taxon>Pseudomonadota</taxon>
        <taxon>Gammaproteobacteria</taxon>
        <taxon>Vibrionales</taxon>
        <taxon>Vibrionaceae</taxon>
        <taxon>Vibrio</taxon>
    </lineage>
</organism>
<sequence>MRGLDYRWIEALDSVVSKGSFERAAEQLFISQSAVSQRIKQLEKYLAQPVLIREQPPRPTLVGKKLLGLYRRVCLIEQELVPELTNQEHVRPVSMSIATNADSLATWLLPALDKVMKSRQVELNLVIYGESRTLDKLKNGEVVGAISLEPQPITGCSAEYLGQMEYLCVASPEFYQKYFAKGVTPRSLIKAPAVSYDQYDELHNKFLWDYFAVPRDKVINHTVGSSEAFVRLALSGAAYCLIPRLQIISELESGALINMTPDFMLSYPIFWHHWQLETGVLLEISEAITAYAKSVLPQ</sequence>
<keyword id="KW-0238">DNA-binding</keyword>
<keyword id="KW-1185">Reference proteome</keyword>
<keyword id="KW-0804">Transcription</keyword>
<keyword id="KW-0805">Transcription regulation</keyword>
<gene>
    <name evidence="1" type="primary">argP</name>
    <name type="synonym">iciA</name>
    <name type="ordered locus">VC_0482</name>
</gene>